<evidence type="ECO:0000250" key="1"/>
<evidence type="ECO:0000255" key="2"/>
<evidence type="ECO:0000269" key="3">
    <source>
    </source>
</evidence>
<evidence type="ECO:0000305" key="4"/>
<protein>
    <recommendedName>
        <fullName>Beta-defensin 38</fullName>
        <shortName>BD-38</shortName>
        <shortName>mBD-38</shortName>
    </recommendedName>
    <alternativeName>
        <fullName>Defensin, beta 38</fullName>
    </alternativeName>
</protein>
<dbReference type="EMBL" id="AJ575424">
    <property type="protein sequence ID" value="CAE01397.1"/>
    <property type="molecule type" value="mRNA"/>
</dbReference>
<dbReference type="EMBL" id="AJ578471">
    <property type="protein sequence ID" value="CAE17668.1"/>
    <property type="molecule type" value="mRNA"/>
</dbReference>
<dbReference type="CCDS" id="CCDS40248.1"/>
<dbReference type="RefSeq" id="NP_898857.1">
    <property type="nucleotide sequence ID" value="NM_183036.2"/>
</dbReference>
<dbReference type="SMR" id="Q7TNV7"/>
<dbReference type="FunCoup" id="Q7TNV7">
    <property type="interactions" value="32"/>
</dbReference>
<dbReference type="PaxDb" id="10090-ENSMUSP00000067553"/>
<dbReference type="ProteomicsDB" id="279350"/>
<dbReference type="DNASU" id="360212"/>
<dbReference type="Ensembl" id="ENSMUST00000066416.4">
    <property type="protein sequence ID" value="ENSMUSP00000067553.4"/>
    <property type="gene ID" value="ENSMUSG00000053790.4"/>
</dbReference>
<dbReference type="GeneID" id="360212"/>
<dbReference type="KEGG" id="mmu:360212"/>
<dbReference type="UCSC" id="uc009laa.1">
    <property type="organism name" value="mouse"/>
</dbReference>
<dbReference type="AGR" id="MGI:2672972"/>
<dbReference type="CTD" id="360212"/>
<dbReference type="MGI" id="MGI:2672972">
    <property type="gene designation" value="Defb38"/>
</dbReference>
<dbReference type="VEuPathDB" id="HostDB:ENSMUSG00000053790"/>
<dbReference type="GeneTree" id="ENSGT01110000267485"/>
<dbReference type="HOGENOM" id="CLU_189296_5_1_1"/>
<dbReference type="InParanoid" id="Q7TNV7"/>
<dbReference type="OMA" id="YFECPWL"/>
<dbReference type="OrthoDB" id="9622366at2759"/>
<dbReference type="PhylomeDB" id="Q7TNV7"/>
<dbReference type="BioGRID-ORCS" id="360212">
    <property type="hits" value="3 hits in 54 CRISPR screens"/>
</dbReference>
<dbReference type="PRO" id="PR:Q7TNV7"/>
<dbReference type="Proteomes" id="UP000000589">
    <property type="component" value="Chromosome 8"/>
</dbReference>
<dbReference type="RNAct" id="Q7TNV7">
    <property type="molecule type" value="protein"/>
</dbReference>
<dbReference type="Bgee" id="ENSMUSG00000053790">
    <property type="expression patterns" value="Expressed in testis"/>
</dbReference>
<dbReference type="ExpressionAtlas" id="Q7TNV7">
    <property type="expression patterns" value="baseline"/>
</dbReference>
<dbReference type="GO" id="GO:0005576">
    <property type="term" value="C:extracellular region"/>
    <property type="evidence" value="ECO:0007669"/>
    <property type="project" value="UniProtKB-SubCell"/>
</dbReference>
<dbReference type="GO" id="GO:0042742">
    <property type="term" value="P:defense response to bacterium"/>
    <property type="evidence" value="ECO:0007669"/>
    <property type="project" value="UniProtKB-KW"/>
</dbReference>
<dbReference type="Gene3D" id="3.10.360.10">
    <property type="entry name" value="Antimicrobial Peptide, Beta-defensin 2, Chain A"/>
    <property type="match status" value="1"/>
</dbReference>
<dbReference type="InterPro" id="IPR001855">
    <property type="entry name" value="Defensin_beta-like"/>
</dbReference>
<dbReference type="PANTHER" id="PTHR21388:SF5">
    <property type="entry name" value="BETA-DEFENSIN 38"/>
    <property type="match status" value="1"/>
</dbReference>
<dbReference type="PANTHER" id="PTHR21388">
    <property type="entry name" value="BETA-DEFENSIN-RELATED"/>
    <property type="match status" value="1"/>
</dbReference>
<dbReference type="Pfam" id="PF00711">
    <property type="entry name" value="Defensin_beta"/>
    <property type="match status" value="1"/>
</dbReference>
<dbReference type="SUPFAM" id="SSF57392">
    <property type="entry name" value="Defensin-like"/>
    <property type="match status" value="1"/>
</dbReference>
<proteinExistence type="evidence at transcript level"/>
<gene>
    <name type="primary">Defb38</name>
</gene>
<feature type="signal peptide" evidence="2">
    <location>
        <begin position="1"/>
        <end position="21"/>
    </location>
</feature>
<feature type="chain" id="PRO_0000006950" description="Beta-defensin 38">
    <location>
        <begin position="22"/>
        <end position="63"/>
    </location>
</feature>
<feature type="disulfide bond" evidence="1">
    <location>
        <begin position="29"/>
        <end position="58"/>
    </location>
</feature>
<feature type="disulfide bond" evidence="1">
    <location>
        <begin position="36"/>
        <end position="51"/>
    </location>
</feature>
<feature type="disulfide bond" evidence="1">
    <location>
        <begin position="41"/>
        <end position="59"/>
    </location>
</feature>
<keyword id="KW-0044">Antibiotic</keyword>
<keyword id="KW-0929">Antimicrobial</keyword>
<keyword id="KW-0211">Defensin</keyword>
<keyword id="KW-1015">Disulfide bond</keyword>
<keyword id="KW-1185">Reference proteome</keyword>
<keyword id="KW-0964">Secreted</keyword>
<keyword id="KW-0732">Signal</keyword>
<name>DFB38_MOUSE</name>
<comment type="function">
    <text evidence="3">Synthetic Defb38 kills both Gram-negative (E.coli and P.aeruginosa) and Gram-positive (E.faecium) bacteria.</text>
</comment>
<comment type="subcellular location">
    <subcellularLocation>
        <location>Secreted</location>
    </subcellularLocation>
</comment>
<comment type="tissue specificity">
    <text evidence="3">Only expressed in epididymis (caput, corpus and cauda).</text>
</comment>
<comment type="similarity">
    <text evidence="4">Belongs to the beta-defensin family.</text>
</comment>
<accession>Q7TNV7</accession>
<sequence length="63" mass="7443">MKISCFLLLILSLYFFQINQAIGPDTKKCVQRKNACHYFECPWLYYSVGTCYKGKGKCCQKRY</sequence>
<organism>
    <name type="scientific">Mus musculus</name>
    <name type="common">Mouse</name>
    <dbReference type="NCBI Taxonomy" id="10090"/>
    <lineage>
        <taxon>Eukaryota</taxon>
        <taxon>Metazoa</taxon>
        <taxon>Chordata</taxon>
        <taxon>Craniata</taxon>
        <taxon>Vertebrata</taxon>
        <taxon>Euteleostomi</taxon>
        <taxon>Mammalia</taxon>
        <taxon>Eutheria</taxon>
        <taxon>Euarchontoglires</taxon>
        <taxon>Glires</taxon>
        <taxon>Rodentia</taxon>
        <taxon>Myomorpha</taxon>
        <taxon>Muroidea</taxon>
        <taxon>Muridae</taxon>
        <taxon>Murinae</taxon>
        <taxon>Mus</taxon>
        <taxon>Mus</taxon>
    </lineage>
</organism>
<reference key="1">
    <citation type="journal article" date="2004" name="J. Biol. Chem.">
        <title>Identification on mouse chromosome 8 of new beta-defensin genes with regionally specific expression in the male reproductive organ.</title>
        <authorList>
            <person name="Zaballos A."/>
            <person name="Villares R."/>
            <person name="Albar J.P."/>
            <person name="Martinez-A C."/>
            <person name="Marquez G."/>
        </authorList>
    </citation>
    <scope>NUCLEOTIDE SEQUENCE [MRNA]</scope>
    <scope>FUNCTION</scope>
    <scope>TISSUE SPECIFICITY</scope>
    <scope>SYNTHESIS OF 22-63</scope>
    <source>
        <strain>BALB/cJ</strain>
        <tissue>Epididymis</tissue>
    </source>
</reference>
<reference key="2">
    <citation type="submission" date="2003-07" db="EMBL/GenBank/DDBJ databases">
        <title>Amino acid residues subject to positive selection in murine beta-defensin antimicrobial peptides.</title>
        <authorList>
            <person name="Maxwell A."/>
            <person name="Dorin J.R."/>
        </authorList>
    </citation>
    <scope>NUCLEOTIDE SEQUENCE [MRNA]</scope>
    <source>
        <strain>C57BL/6J</strain>
    </source>
</reference>